<evidence type="ECO:0000255" key="1">
    <source>
        <dbReference type="HAMAP-Rule" id="MF_01852"/>
    </source>
</evidence>
<comment type="function">
    <text evidence="1">Required for the formation of a threonylcarbamoyl group on adenosine at position 37 (t(6)A37) in tRNAs that read codons beginning with adenine. Catalyzes the conversion of L-threonine, HCO(3)(-)/CO(2) and ATP to give threonylcarbamoyl-AMP (TC-AMP) as the acyladenylate intermediate, with the release of diphosphate.</text>
</comment>
<comment type="catalytic activity">
    <reaction evidence="1">
        <text>L-threonine + hydrogencarbonate + ATP = L-threonylcarbamoyladenylate + diphosphate + H2O</text>
        <dbReference type="Rhea" id="RHEA:36407"/>
        <dbReference type="ChEBI" id="CHEBI:15377"/>
        <dbReference type="ChEBI" id="CHEBI:17544"/>
        <dbReference type="ChEBI" id="CHEBI:30616"/>
        <dbReference type="ChEBI" id="CHEBI:33019"/>
        <dbReference type="ChEBI" id="CHEBI:57926"/>
        <dbReference type="ChEBI" id="CHEBI:73682"/>
        <dbReference type="EC" id="2.7.7.87"/>
    </reaction>
</comment>
<comment type="subcellular location">
    <subcellularLocation>
        <location evidence="1">Cytoplasm</location>
    </subcellularLocation>
</comment>
<comment type="similarity">
    <text evidence="1">Belongs to the SUA5 family. TsaC subfamily.</text>
</comment>
<feature type="chain" id="PRO_0000352983" description="Threonylcarbamoyl-AMP synthase">
    <location>
        <begin position="1"/>
        <end position="187"/>
    </location>
</feature>
<feature type="domain" description="YrdC-like" evidence="1">
    <location>
        <begin position="3"/>
        <end position="187"/>
    </location>
</feature>
<organism>
    <name type="scientific">Shewanella pealeana (strain ATCC 700345 / ANG-SQ1)</name>
    <dbReference type="NCBI Taxonomy" id="398579"/>
    <lineage>
        <taxon>Bacteria</taxon>
        <taxon>Pseudomonadati</taxon>
        <taxon>Pseudomonadota</taxon>
        <taxon>Gammaproteobacteria</taxon>
        <taxon>Alteromonadales</taxon>
        <taxon>Shewanellaceae</taxon>
        <taxon>Shewanella</taxon>
    </lineage>
</organism>
<protein>
    <recommendedName>
        <fullName evidence="1">Threonylcarbamoyl-AMP synthase</fullName>
        <shortName evidence="1">TC-AMP synthase</shortName>
        <ecNumber evidence="1">2.7.7.87</ecNumber>
    </recommendedName>
    <alternativeName>
        <fullName evidence="1">L-threonylcarbamoyladenylate synthase</fullName>
    </alternativeName>
    <alternativeName>
        <fullName evidence="1">t(6)A37 threonylcarbamoyladenosine biosynthesis protein TsaC</fullName>
    </alternativeName>
    <alternativeName>
        <fullName evidence="1">tRNA threonylcarbamoyladenosine biosynthesis protein TsaC</fullName>
    </alternativeName>
</protein>
<name>TSAC_SHEPA</name>
<sequence>MLQVLPADAAELVEQGGVIAYPTEAVYGLGCDPDNDEAINQLLQIKQRPWQKGLILVAGDYQQLLPYIDESQLNAQQLAFAQSKWPGPFTFIMPVKPGLSKLLSGAFDSIAVRVTAHAGVKALCAAIHKPIVSTSANLSGQEPALSPLAVKQQFEGIISGLVVGELGSQASPSTIIDARSGTVIREG</sequence>
<gene>
    <name evidence="1" type="primary">tsaC</name>
    <name type="synonym">rimN</name>
    <name type="ordered locus">Spea_0037</name>
</gene>
<keyword id="KW-0067">ATP-binding</keyword>
<keyword id="KW-0963">Cytoplasm</keyword>
<keyword id="KW-0547">Nucleotide-binding</keyword>
<keyword id="KW-0548">Nucleotidyltransferase</keyword>
<keyword id="KW-1185">Reference proteome</keyword>
<keyword id="KW-0808">Transferase</keyword>
<keyword id="KW-0819">tRNA processing</keyword>
<proteinExistence type="inferred from homology"/>
<accession>A8GYH9</accession>
<reference key="1">
    <citation type="submission" date="2007-10" db="EMBL/GenBank/DDBJ databases">
        <title>Complete sequence of Shewanella pealeana ATCC 700345.</title>
        <authorList>
            <consortium name="US DOE Joint Genome Institute"/>
            <person name="Copeland A."/>
            <person name="Lucas S."/>
            <person name="Lapidus A."/>
            <person name="Barry K."/>
            <person name="Glavina del Rio T."/>
            <person name="Dalin E."/>
            <person name="Tice H."/>
            <person name="Pitluck S."/>
            <person name="Chertkov O."/>
            <person name="Brettin T."/>
            <person name="Bruce D."/>
            <person name="Detter J.C."/>
            <person name="Han C."/>
            <person name="Schmutz J."/>
            <person name="Larimer F."/>
            <person name="Land M."/>
            <person name="Hauser L."/>
            <person name="Kyrpides N."/>
            <person name="Kim E."/>
            <person name="Zhao J.-S.Z."/>
            <person name="Manno D."/>
            <person name="Hawari J."/>
            <person name="Richardson P."/>
        </authorList>
    </citation>
    <scope>NUCLEOTIDE SEQUENCE [LARGE SCALE GENOMIC DNA]</scope>
    <source>
        <strain>ATCC 700345 / ANG-SQ1</strain>
    </source>
</reference>
<dbReference type="EC" id="2.7.7.87" evidence="1"/>
<dbReference type="EMBL" id="CP000851">
    <property type="protein sequence ID" value="ABV85366.1"/>
    <property type="molecule type" value="Genomic_DNA"/>
</dbReference>
<dbReference type="RefSeq" id="WP_012153312.1">
    <property type="nucleotide sequence ID" value="NC_009901.1"/>
</dbReference>
<dbReference type="SMR" id="A8GYH9"/>
<dbReference type="STRING" id="398579.Spea_0037"/>
<dbReference type="KEGG" id="spl:Spea_0037"/>
<dbReference type="eggNOG" id="COG0009">
    <property type="taxonomic scope" value="Bacteria"/>
</dbReference>
<dbReference type="HOGENOM" id="CLU_031397_6_0_6"/>
<dbReference type="OrthoDB" id="9814580at2"/>
<dbReference type="Proteomes" id="UP000002608">
    <property type="component" value="Chromosome"/>
</dbReference>
<dbReference type="GO" id="GO:0005737">
    <property type="term" value="C:cytoplasm"/>
    <property type="evidence" value="ECO:0007669"/>
    <property type="project" value="UniProtKB-SubCell"/>
</dbReference>
<dbReference type="GO" id="GO:0005524">
    <property type="term" value="F:ATP binding"/>
    <property type="evidence" value="ECO:0007669"/>
    <property type="project" value="UniProtKB-UniRule"/>
</dbReference>
<dbReference type="GO" id="GO:0003725">
    <property type="term" value="F:double-stranded RNA binding"/>
    <property type="evidence" value="ECO:0007669"/>
    <property type="project" value="InterPro"/>
</dbReference>
<dbReference type="GO" id="GO:0061710">
    <property type="term" value="F:L-threonylcarbamoyladenylate synthase"/>
    <property type="evidence" value="ECO:0007669"/>
    <property type="project" value="UniProtKB-EC"/>
</dbReference>
<dbReference type="GO" id="GO:0000049">
    <property type="term" value="F:tRNA binding"/>
    <property type="evidence" value="ECO:0007669"/>
    <property type="project" value="TreeGrafter"/>
</dbReference>
<dbReference type="GO" id="GO:0006450">
    <property type="term" value="P:regulation of translational fidelity"/>
    <property type="evidence" value="ECO:0007669"/>
    <property type="project" value="TreeGrafter"/>
</dbReference>
<dbReference type="GO" id="GO:0002949">
    <property type="term" value="P:tRNA threonylcarbamoyladenosine modification"/>
    <property type="evidence" value="ECO:0007669"/>
    <property type="project" value="UniProtKB-UniRule"/>
</dbReference>
<dbReference type="FunFam" id="3.90.870.10:FF:000004">
    <property type="entry name" value="Threonylcarbamoyl-AMP synthase"/>
    <property type="match status" value="1"/>
</dbReference>
<dbReference type="Gene3D" id="3.90.870.10">
    <property type="entry name" value="DHBP synthase"/>
    <property type="match status" value="1"/>
</dbReference>
<dbReference type="HAMAP" id="MF_01852">
    <property type="entry name" value="TsaC"/>
    <property type="match status" value="1"/>
</dbReference>
<dbReference type="InterPro" id="IPR017945">
    <property type="entry name" value="DHBP_synth_RibB-like_a/b_dom"/>
</dbReference>
<dbReference type="InterPro" id="IPR006070">
    <property type="entry name" value="Sua5-like_dom"/>
</dbReference>
<dbReference type="InterPro" id="IPR023535">
    <property type="entry name" value="TC-AMP_synthase"/>
</dbReference>
<dbReference type="InterPro" id="IPR050156">
    <property type="entry name" value="TC-AMP_synthase_SUA5"/>
</dbReference>
<dbReference type="NCBIfam" id="TIGR00057">
    <property type="entry name" value="L-threonylcarbamoyladenylate synthase"/>
    <property type="match status" value="1"/>
</dbReference>
<dbReference type="PANTHER" id="PTHR17490">
    <property type="entry name" value="SUA5"/>
    <property type="match status" value="1"/>
</dbReference>
<dbReference type="PANTHER" id="PTHR17490:SF18">
    <property type="entry name" value="THREONYLCARBAMOYL-AMP SYNTHASE"/>
    <property type="match status" value="1"/>
</dbReference>
<dbReference type="Pfam" id="PF01300">
    <property type="entry name" value="Sua5_yciO_yrdC"/>
    <property type="match status" value="1"/>
</dbReference>
<dbReference type="SUPFAM" id="SSF55821">
    <property type="entry name" value="YrdC/RibB"/>
    <property type="match status" value="1"/>
</dbReference>
<dbReference type="PROSITE" id="PS51163">
    <property type="entry name" value="YRDC"/>
    <property type="match status" value="1"/>
</dbReference>